<organism>
    <name type="scientific">Mycolicibacterium smegmatis (strain ATCC 700084 / mc(2)155)</name>
    <name type="common">Mycobacterium smegmatis</name>
    <dbReference type="NCBI Taxonomy" id="246196"/>
    <lineage>
        <taxon>Bacteria</taxon>
        <taxon>Bacillati</taxon>
        <taxon>Actinomycetota</taxon>
        <taxon>Actinomycetes</taxon>
        <taxon>Mycobacteriales</taxon>
        <taxon>Mycobacteriaceae</taxon>
        <taxon>Mycolicibacterium</taxon>
    </lineage>
</organism>
<accession>A0R048</accession>
<accession>I7GBQ0</accession>
<sequence>MTSGPSQPFPSASGPDDGPSWPRILGRLTTGQNLPNGHAAWAMDQIMTGAATPAQISGFAVSMKMKRPTASEVRELADIMLTHARRVPTDEIGTDTVDIVGTGGDGANTVNLSTMASIVVAACGVPVVKHGNRAASSLSGGADTLEALGVRIDLGPDDVARSVREVGIGFAFAPQFHPSYKHASIVRREIGVPTVFNLLGPLTNPAGPRAGLIGCAWADLAEVMAGVFAARGSSVLVVHGDDGLDELTTTTTSTIWRVQGGTMERLTFDPAAFGFKRAEISELVGGDASENAAEARAVLGGAKGPVRDAVVLNAAGAMVAHAGLASDAQWLPAWEAGLARAVEAIDSGAAEQLLARWVRFGQQL</sequence>
<keyword id="KW-0028">Amino-acid biosynthesis</keyword>
<keyword id="KW-0057">Aromatic amino acid biosynthesis</keyword>
<keyword id="KW-0328">Glycosyltransferase</keyword>
<keyword id="KW-0460">Magnesium</keyword>
<keyword id="KW-0479">Metal-binding</keyword>
<keyword id="KW-1185">Reference proteome</keyword>
<keyword id="KW-0808">Transferase</keyword>
<keyword id="KW-0822">Tryptophan biosynthesis</keyword>
<gene>
    <name evidence="1" type="primary">trpD</name>
    <name type="ordered locus">MSMEG_4258</name>
    <name type="ordered locus">MSMEI_4159</name>
</gene>
<dbReference type="EC" id="2.4.2.18" evidence="1"/>
<dbReference type="EMBL" id="CP000480">
    <property type="protein sequence ID" value="ABK71368.1"/>
    <property type="molecule type" value="Genomic_DNA"/>
</dbReference>
<dbReference type="EMBL" id="CP001663">
    <property type="protein sequence ID" value="AFP40616.1"/>
    <property type="molecule type" value="Genomic_DNA"/>
</dbReference>
<dbReference type="RefSeq" id="WP_011729684.1">
    <property type="nucleotide sequence ID" value="NZ_SIJM01000003.1"/>
</dbReference>
<dbReference type="RefSeq" id="YP_888536.1">
    <property type="nucleotide sequence ID" value="NC_008596.1"/>
</dbReference>
<dbReference type="SMR" id="A0R048"/>
<dbReference type="STRING" id="246196.MSMEG_4258"/>
<dbReference type="PaxDb" id="246196-MSMEI_4159"/>
<dbReference type="GeneID" id="93458978"/>
<dbReference type="KEGG" id="msg:MSMEI_4159"/>
<dbReference type="KEGG" id="msm:MSMEG_4258"/>
<dbReference type="eggNOG" id="COG0547">
    <property type="taxonomic scope" value="Bacteria"/>
</dbReference>
<dbReference type="OrthoDB" id="9806430at2"/>
<dbReference type="UniPathway" id="UPA00035">
    <property type="reaction ID" value="UER00041"/>
</dbReference>
<dbReference type="Proteomes" id="UP000000757">
    <property type="component" value="Chromosome"/>
</dbReference>
<dbReference type="Proteomes" id="UP000006158">
    <property type="component" value="Chromosome"/>
</dbReference>
<dbReference type="GO" id="GO:0005829">
    <property type="term" value="C:cytosol"/>
    <property type="evidence" value="ECO:0007669"/>
    <property type="project" value="TreeGrafter"/>
</dbReference>
<dbReference type="GO" id="GO:0004048">
    <property type="term" value="F:anthranilate phosphoribosyltransferase activity"/>
    <property type="evidence" value="ECO:0007669"/>
    <property type="project" value="UniProtKB-UniRule"/>
</dbReference>
<dbReference type="GO" id="GO:0000287">
    <property type="term" value="F:magnesium ion binding"/>
    <property type="evidence" value="ECO:0007669"/>
    <property type="project" value="UniProtKB-UniRule"/>
</dbReference>
<dbReference type="GO" id="GO:0000162">
    <property type="term" value="P:L-tryptophan biosynthetic process"/>
    <property type="evidence" value="ECO:0007669"/>
    <property type="project" value="UniProtKB-UniRule"/>
</dbReference>
<dbReference type="FunFam" id="3.40.1030.10:FF:000002">
    <property type="entry name" value="Anthranilate phosphoribosyltransferase"/>
    <property type="match status" value="1"/>
</dbReference>
<dbReference type="Gene3D" id="3.40.1030.10">
    <property type="entry name" value="Nucleoside phosphorylase/phosphoribosyltransferase catalytic domain"/>
    <property type="match status" value="1"/>
</dbReference>
<dbReference type="Gene3D" id="1.20.970.10">
    <property type="entry name" value="Transferase, Pyrimidine Nucleoside Phosphorylase, Chain C"/>
    <property type="match status" value="1"/>
</dbReference>
<dbReference type="HAMAP" id="MF_00211">
    <property type="entry name" value="TrpD"/>
    <property type="match status" value="1"/>
</dbReference>
<dbReference type="InterPro" id="IPR005940">
    <property type="entry name" value="Anthranilate_Pribosyl_Tfrase"/>
</dbReference>
<dbReference type="InterPro" id="IPR000312">
    <property type="entry name" value="Glycosyl_Trfase_fam3"/>
</dbReference>
<dbReference type="InterPro" id="IPR017459">
    <property type="entry name" value="Glycosyl_Trfase_fam3_N_dom"/>
</dbReference>
<dbReference type="InterPro" id="IPR036320">
    <property type="entry name" value="Glycosyl_Trfase_fam3_N_dom_sf"/>
</dbReference>
<dbReference type="InterPro" id="IPR035902">
    <property type="entry name" value="Nuc_phospho_transferase"/>
</dbReference>
<dbReference type="NCBIfam" id="TIGR01245">
    <property type="entry name" value="trpD"/>
    <property type="match status" value="1"/>
</dbReference>
<dbReference type="PANTHER" id="PTHR43285">
    <property type="entry name" value="ANTHRANILATE PHOSPHORIBOSYLTRANSFERASE"/>
    <property type="match status" value="1"/>
</dbReference>
<dbReference type="PANTHER" id="PTHR43285:SF2">
    <property type="entry name" value="ANTHRANILATE PHOSPHORIBOSYLTRANSFERASE"/>
    <property type="match status" value="1"/>
</dbReference>
<dbReference type="Pfam" id="PF02885">
    <property type="entry name" value="Glycos_trans_3N"/>
    <property type="match status" value="1"/>
</dbReference>
<dbReference type="Pfam" id="PF00591">
    <property type="entry name" value="Glycos_transf_3"/>
    <property type="match status" value="1"/>
</dbReference>
<dbReference type="SUPFAM" id="SSF52418">
    <property type="entry name" value="Nucleoside phosphorylase/phosphoribosyltransferase catalytic domain"/>
    <property type="match status" value="1"/>
</dbReference>
<dbReference type="SUPFAM" id="SSF47648">
    <property type="entry name" value="Nucleoside phosphorylase/phosphoribosyltransferase N-terminal domain"/>
    <property type="match status" value="1"/>
</dbReference>
<feature type="chain" id="PRO_0000325437" description="Anthranilate phosphoribosyltransferase">
    <location>
        <begin position="1"/>
        <end position="364"/>
    </location>
</feature>
<feature type="region of interest" description="Disordered" evidence="2">
    <location>
        <begin position="1"/>
        <end position="22"/>
    </location>
</feature>
<feature type="compositionally biased region" description="Polar residues" evidence="2">
    <location>
        <begin position="1"/>
        <end position="10"/>
    </location>
</feature>
<feature type="binding site" evidence="1">
    <location>
        <position position="101"/>
    </location>
    <ligand>
        <name>5-phospho-alpha-D-ribose 1-diphosphate</name>
        <dbReference type="ChEBI" id="CHEBI:58017"/>
    </ligand>
</feature>
<feature type="binding site" evidence="1">
    <location>
        <position position="101"/>
    </location>
    <ligand>
        <name>anthranilate</name>
        <dbReference type="ChEBI" id="CHEBI:16567"/>
        <label>1</label>
    </ligand>
</feature>
<feature type="binding site" evidence="1">
    <location>
        <begin position="104"/>
        <end position="105"/>
    </location>
    <ligand>
        <name>5-phospho-alpha-D-ribose 1-diphosphate</name>
        <dbReference type="ChEBI" id="CHEBI:58017"/>
    </ligand>
</feature>
<feature type="binding site" evidence="1">
    <location>
        <position position="109"/>
    </location>
    <ligand>
        <name>5-phospho-alpha-D-ribose 1-diphosphate</name>
        <dbReference type="ChEBI" id="CHEBI:58017"/>
    </ligand>
</feature>
<feature type="binding site" evidence="1">
    <location>
        <begin position="111"/>
        <end position="114"/>
    </location>
    <ligand>
        <name>5-phospho-alpha-D-ribose 1-diphosphate</name>
        <dbReference type="ChEBI" id="CHEBI:58017"/>
    </ligand>
</feature>
<feature type="binding site" evidence="1">
    <location>
        <position position="113"/>
    </location>
    <ligand>
        <name>Mg(2+)</name>
        <dbReference type="ChEBI" id="CHEBI:18420"/>
        <label>1</label>
    </ligand>
</feature>
<feature type="binding site" evidence="1">
    <location>
        <begin position="129"/>
        <end position="137"/>
    </location>
    <ligand>
        <name>5-phospho-alpha-D-ribose 1-diphosphate</name>
        <dbReference type="ChEBI" id="CHEBI:58017"/>
    </ligand>
</feature>
<feature type="binding site" evidence="1">
    <location>
        <position position="132"/>
    </location>
    <ligand>
        <name>anthranilate</name>
        <dbReference type="ChEBI" id="CHEBI:16567"/>
        <label>1</label>
    </ligand>
</feature>
<feature type="binding site" evidence="1">
    <location>
        <position position="141"/>
    </location>
    <ligand>
        <name>5-phospho-alpha-D-ribose 1-diphosphate</name>
        <dbReference type="ChEBI" id="CHEBI:58017"/>
    </ligand>
</feature>
<feature type="binding site" evidence="1">
    <location>
        <position position="187"/>
    </location>
    <ligand>
        <name>anthranilate</name>
        <dbReference type="ChEBI" id="CHEBI:16567"/>
        <label>2</label>
    </ligand>
</feature>
<feature type="binding site" evidence="1">
    <location>
        <position position="245"/>
    </location>
    <ligand>
        <name>Mg(2+)</name>
        <dbReference type="ChEBI" id="CHEBI:18420"/>
        <label>2</label>
    </ligand>
</feature>
<feature type="binding site" evidence="1">
    <location>
        <position position="246"/>
    </location>
    <ligand>
        <name>Mg(2+)</name>
        <dbReference type="ChEBI" id="CHEBI:18420"/>
        <label>1</label>
    </ligand>
</feature>
<feature type="binding site" evidence="1">
    <location>
        <position position="246"/>
    </location>
    <ligand>
        <name>Mg(2+)</name>
        <dbReference type="ChEBI" id="CHEBI:18420"/>
        <label>2</label>
    </ligand>
</feature>
<comment type="function">
    <text evidence="1">Catalyzes the transfer of the phosphoribosyl group of 5-phosphorylribose-1-pyrophosphate (PRPP) to anthranilate to yield N-(5'-phosphoribosyl)-anthranilate (PRA).</text>
</comment>
<comment type="catalytic activity">
    <reaction evidence="1">
        <text>N-(5-phospho-beta-D-ribosyl)anthranilate + diphosphate = 5-phospho-alpha-D-ribose 1-diphosphate + anthranilate</text>
        <dbReference type="Rhea" id="RHEA:11768"/>
        <dbReference type="ChEBI" id="CHEBI:16567"/>
        <dbReference type="ChEBI" id="CHEBI:18277"/>
        <dbReference type="ChEBI" id="CHEBI:33019"/>
        <dbReference type="ChEBI" id="CHEBI:58017"/>
        <dbReference type="EC" id="2.4.2.18"/>
    </reaction>
</comment>
<comment type="cofactor">
    <cofactor evidence="1">
        <name>Mg(2+)</name>
        <dbReference type="ChEBI" id="CHEBI:18420"/>
    </cofactor>
    <text evidence="1">Binds 2 magnesium ions per monomer.</text>
</comment>
<comment type="pathway">
    <text evidence="1">Amino-acid biosynthesis; L-tryptophan biosynthesis; L-tryptophan from chorismate: step 2/5.</text>
</comment>
<comment type="subunit">
    <text evidence="1">Homodimer.</text>
</comment>
<comment type="similarity">
    <text evidence="1">Belongs to the anthranilate phosphoribosyltransferase family.</text>
</comment>
<evidence type="ECO:0000255" key="1">
    <source>
        <dbReference type="HAMAP-Rule" id="MF_00211"/>
    </source>
</evidence>
<evidence type="ECO:0000256" key="2">
    <source>
        <dbReference type="SAM" id="MobiDB-lite"/>
    </source>
</evidence>
<protein>
    <recommendedName>
        <fullName evidence="1">Anthranilate phosphoribosyltransferase</fullName>
        <ecNumber evidence="1">2.4.2.18</ecNumber>
    </recommendedName>
</protein>
<proteinExistence type="evidence at protein level"/>
<name>TRPD_MYCS2</name>
<reference key="1">
    <citation type="submission" date="2006-10" db="EMBL/GenBank/DDBJ databases">
        <authorList>
            <person name="Fleischmann R.D."/>
            <person name="Dodson R.J."/>
            <person name="Haft D.H."/>
            <person name="Merkel J.S."/>
            <person name="Nelson W.C."/>
            <person name="Fraser C.M."/>
        </authorList>
    </citation>
    <scope>NUCLEOTIDE SEQUENCE [LARGE SCALE GENOMIC DNA]</scope>
    <source>
        <strain>ATCC 700084 / mc(2)155</strain>
    </source>
</reference>
<reference key="2">
    <citation type="journal article" date="2007" name="Genome Biol.">
        <title>Interrupted coding sequences in Mycobacterium smegmatis: authentic mutations or sequencing errors?</title>
        <authorList>
            <person name="Deshayes C."/>
            <person name="Perrodou E."/>
            <person name="Gallien S."/>
            <person name="Euphrasie D."/>
            <person name="Schaeffer C."/>
            <person name="Van-Dorsselaer A."/>
            <person name="Poch O."/>
            <person name="Lecompte O."/>
            <person name="Reyrat J.-M."/>
        </authorList>
    </citation>
    <scope>NUCLEOTIDE SEQUENCE [LARGE SCALE GENOMIC DNA]</scope>
    <source>
        <strain>ATCC 700084 / mc(2)155</strain>
    </source>
</reference>
<reference key="3">
    <citation type="journal article" date="2009" name="Genome Res.">
        <title>Ortho-proteogenomics: multiple proteomes investigation through orthology and a new MS-based protocol.</title>
        <authorList>
            <person name="Gallien S."/>
            <person name="Perrodou E."/>
            <person name="Carapito C."/>
            <person name="Deshayes C."/>
            <person name="Reyrat J.-M."/>
            <person name="Van Dorsselaer A."/>
            <person name="Poch O."/>
            <person name="Schaeffer C."/>
            <person name="Lecompte O."/>
        </authorList>
    </citation>
    <scope>NUCLEOTIDE SEQUENCE [LARGE SCALE GENOMIC DNA]</scope>
    <scope>IDENTIFICATION BY MASS SPECTROMETRY [LARGE SCALE ANALYSIS]</scope>
    <source>
        <strain>ATCC 700084 / mc(2)155</strain>
    </source>
</reference>